<keyword id="KW-0031">Aminopeptidase</keyword>
<keyword id="KW-0963">Cytoplasm</keyword>
<keyword id="KW-0378">Hydrolase</keyword>
<keyword id="KW-0645">Protease</keyword>
<dbReference type="EC" id="3.4.11.5"/>
<dbReference type="EMBL" id="AL157959">
    <property type="protein sequence ID" value="CAM08330.1"/>
    <property type="molecule type" value="Genomic_DNA"/>
</dbReference>
<dbReference type="PIR" id="F81878">
    <property type="entry name" value="F81878"/>
</dbReference>
<dbReference type="RefSeq" id="WP_002246883.1">
    <property type="nucleotide sequence ID" value="NC_003116.1"/>
</dbReference>
<dbReference type="SMR" id="Q9JUV1"/>
<dbReference type="ESTHER" id="neigo-pip">
    <property type="family name" value="Proline_iminopeptidase"/>
</dbReference>
<dbReference type="MEROPS" id="S33.001"/>
<dbReference type="EnsemblBacteria" id="CAM08330">
    <property type="protein sequence ID" value="CAM08330"/>
    <property type="gene ID" value="NMA1122"/>
</dbReference>
<dbReference type="KEGG" id="nma:NMA1122"/>
<dbReference type="HOGENOM" id="CLU_043739_2_2_4"/>
<dbReference type="Proteomes" id="UP000000626">
    <property type="component" value="Chromosome"/>
</dbReference>
<dbReference type="GO" id="GO:0005737">
    <property type="term" value="C:cytoplasm"/>
    <property type="evidence" value="ECO:0007669"/>
    <property type="project" value="UniProtKB-SubCell"/>
</dbReference>
<dbReference type="GO" id="GO:0004177">
    <property type="term" value="F:aminopeptidase activity"/>
    <property type="evidence" value="ECO:0007669"/>
    <property type="project" value="UniProtKB-KW"/>
</dbReference>
<dbReference type="GO" id="GO:0006508">
    <property type="term" value="P:proteolysis"/>
    <property type="evidence" value="ECO:0007669"/>
    <property type="project" value="UniProtKB-KW"/>
</dbReference>
<dbReference type="Gene3D" id="3.40.50.1820">
    <property type="entry name" value="alpha/beta hydrolase"/>
    <property type="match status" value="1"/>
</dbReference>
<dbReference type="InterPro" id="IPR000073">
    <property type="entry name" value="AB_hydrolase_1"/>
</dbReference>
<dbReference type="InterPro" id="IPR029058">
    <property type="entry name" value="AB_hydrolase_fold"/>
</dbReference>
<dbReference type="InterPro" id="IPR002410">
    <property type="entry name" value="Peptidase_S33"/>
</dbReference>
<dbReference type="InterPro" id="IPR005944">
    <property type="entry name" value="Pro_iminopeptidase"/>
</dbReference>
<dbReference type="NCBIfam" id="TIGR01249">
    <property type="entry name" value="pro_imino_pep_1"/>
    <property type="match status" value="1"/>
</dbReference>
<dbReference type="PANTHER" id="PTHR43722">
    <property type="entry name" value="PROLINE IMINOPEPTIDASE"/>
    <property type="match status" value="1"/>
</dbReference>
<dbReference type="PANTHER" id="PTHR43722:SF1">
    <property type="entry name" value="PROLINE IMINOPEPTIDASE"/>
    <property type="match status" value="1"/>
</dbReference>
<dbReference type="Pfam" id="PF00561">
    <property type="entry name" value="Abhydrolase_1"/>
    <property type="match status" value="1"/>
</dbReference>
<dbReference type="PIRSF" id="PIRSF006431">
    <property type="entry name" value="Pept_S33"/>
    <property type="match status" value="1"/>
</dbReference>
<dbReference type="PRINTS" id="PR00111">
    <property type="entry name" value="ABHYDROLASE"/>
</dbReference>
<dbReference type="PRINTS" id="PR00793">
    <property type="entry name" value="PROAMNOPTASE"/>
</dbReference>
<dbReference type="SUPFAM" id="SSF53474">
    <property type="entry name" value="alpha/beta-Hydrolases"/>
    <property type="match status" value="1"/>
</dbReference>
<protein>
    <recommendedName>
        <fullName>Proline iminopeptidase</fullName>
        <shortName>PIP</shortName>
        <ecNumber>3.4.11.5</ecNumber>
    </recommendedName>
    <alternativeName>
        <fullName>Prolyl aminopeptidase</fullName>
        <shortName>PAP</shortName>
    </alternativeName>
</protein>
<feature type="chain" id="PRO_0000080842" description="Proline iminopeptidase">
    <location>
        <begin position="1"/>
        <end position="310"/>
    </location>
</feature>
<feature type="domain" description="AB hydrolase-1" evidence="2">
    <location>
        <begin position="33"/>
        <end position="290"/>
    </location>
</feature>
<feature type="active site" description="Nucleophile" evidence="1">
    <location>
        <position position="107"/>
    </location>
</feature>
<feature type="active site" evidence="1">
    <location>
        <position position="260"/>
    </location>
</feature>
<feature type="active site" description="Proton donor" evidence="1">
    <location>
        <position position="287"/>
    </location>
</feature>
<evidence type="ECO:0000250" key="1"/>
<evidence type="ECO:0000255" key="2"/>
<evidence type="ECO:0000305" key="3"/>
<sequence length="310" mass="34901">MYEIKQPFHSGYLQVSEIHQIYWEESGNPDGVPVIFLHGGPGAGASPECRGFFNPDVFRIVIIDQRGCGRSRPYACAEDNTTWDLVADIEKVREMLGIGKWLVFGGSWGSTLSLAYAQTHPERVKGLVLRGIFLCRPSETVWLNEAGGVSRIYPEQWQKFVAPIAENRRNQLIEAYHGLLFHQDEEVCLSAAKAWADWESYLIRFEPEEVDEDAYASLAIARLENHYFVNGGWLQGDRAILNNIGKIQHIPTIIVQGRYDLCTPMQSAWALSKAFPEAELRVVQAGHRAFDPPLVDALVQAVEDILPHLL</sequence>
<organism>
    <name type="scientific">Neisseria meningitidis serogroup A / serotype 4A (strain DSM 15465 / Z2491)</name>
    <dbReference type="NCBI Taxonomy" id="122587"/>
    <lineage>
        <taxon>Bacteria</taxon>
        <taxon>Pseudomonadati</taxon>
        <taxon>Pseudomonadota</taxon>
        <taxon>Betaproteobacteria</taxon>
        <taxon>Neisseriales</taxon>
        <taxon>Neisseriaceae</taxon>
        <taxon>Neisseria</taxon>
    </lineage>
</organism>
<accession>Q9JUV1</accession>
<accession>A1IRE4</accession>
<proteinExistence type="inferred from homology"/>
<comment type="function">
    <text evidence="1">Specifically catalyzes the removal of N-terminal proline residues from peptides.</text>
</comment>
<comment type="catalytic activity">
    <reaction>
        <text>Release of N-terminal proline from a peptide.</text>
        <dbReference type="EC" id="3.4.11.5"/>
    </reaction>
</comment>
<comment type="subcellular location">
    <subcellularLocation>
        <location evidence="1">Cytoplasm</location>
    </subcellularLocation>
</comment>
<comment type="similarity">
    <text evidence="3">Belongs to the peptidase S33 family.</text>
</comment>
<gene>
    <name type="primary">pip</name>
    <name type="ordered locus">NMA1122</name>
</gene>
<name>PIP_NEIMA</name>
<reference key="1">
    <citation type="journal article" date="2000" name="Nature">
        <title>Complete DNA sequence of a serogroup A strain of Neisseria meningitidis Z2491.</title>
        <authorList>
            <person name="Parkhill J."/>
            <person name="Achtman M."/>
            <person name="James K.D."/>
            <person name="Bentley S.D."/>
            <person name="Churcher C.M."/>
            <person name="Klee S.R."/>
            <person name="Morelli G."/>
            <person name="Basham D."/>
            <person name="Brown D."/>
            <person name="Chillingworth T."/>
            <person name="Davies R.M."/>
            <person name="Davis P."/>
            <person name="Devlin K."/>
            <person name="Feltwell T."/>
            <person name="Hamlin N."/>
            <person name="Holroyd S."/>
            <person name="Jagels K."/>
            <person name="Leather S."/>
            <person name="Moule S."/>
            <person name="Mungall K.L."/>
            <person name="Quail M.A."/>
            <person name="Rajandream M.A."/>
            <person name="Rutherford K.M."/>
            <person name="Simmonds M."/>
            <person name="Skelton J."/>
            <person name="Whitehead S."/>
            <person name="Spratt B.G."/>
            <person name="Barrell B.G."/>
        </authorList>
    </citation>
    <scope>NUCLEOTIDE SEQUENCE [LARGE SCALE GENOMIC DNA]</scope>
    <source>
        <strain>DSM 15465 / Z2491</strain>
    </source>
</reference>